<proteinExistence type="inferred from homology"/>
<keyword id="KW-0067">ATP-binding</keyword>
<keyword id="KW-0227">DNA damage</keyword>
<keyword id="KW-0234">DNA repair</keyword>
<keyword id="KW-0238">DNA-binding</keyword>
<keyword id="KW-0547">Nucleotide-binding</keyword>
<name>MUTS_STAAT</name>
<protein>
    <recommendedName>
        <fullName evidence="1">DNA mismatch repair protein MutS</fullName>
    </recommendedName>
</protein>
<organism>
    <name type="scientific">Staphylococcus aureus (strain USA300 / TCH1516)</name>
    <dbReference type="NCBI Taxonomy" id="451516"/>
    <lineage>
        <taxon>Bacteria</taxon>
        <taxon>Bacillati</taxon>
        <taxon>Bacillota</taxon>
        <taxon>Bacilli</taxon>
        <taxon>Bacillales</taxon>
        <taxon>Staphylococcaceae</taxon>
        <taxon>Staphylococcus</taxon>
    </lineage>
</organism>
<dbReference type="EMBL" id="CP000730">
    <property type="protein sequence ID" value="ABX29241.1"/>
    <property type="molecule type" value="Genomic_DNA"/>
</dbReference>
<dbReference type="RefSeq" id="WP_000073352.1">
    <property type="nucleotide sequence ID" value="NC_010079.1"/>
</dbReference>
<dbReference type="SMR" id="A8Z1W6"/>
<dbReference type="KEGG" id="sax:USA300HOU_1227"/>
<dbReference type="HOGENOM" id="CLU_002472_4_0_9"/>
<dbReference type="GO" id="GO:0005829">
    <property type="term" value="C:cytosol"/>
    <property type="evidence" value="ECO:0007669"/>
    <property type="project" value="TreeGrafter"/>
</dbReference>
<dbReference type="GO" id="GO:0005524">
    <property type="term" value="F:ATP binding"/>
    <property type="evidence" value="ECO:0007669"/>
    <property type="project" value="UniProtKB-UniRule"/>
</dbReference>
<dbReference type="GO" id="GO:0140664">
    <property type="term" value="F:ATP-dependent DNA damage sensor activity"/>
    <property type="evidence" value="ECO:0007669"/>
    <property type="project" value="InterPro"/>
</dbReference>
<dbReference type="GO" id="GO:0003684">
    <property type="term" value="F:damaged DNA binding"/>
    <property type="evidence" value="ECO:0007669"/>
    <property type="project" value="UniProtKB-UniRule"/>
</dbReference>
<dbReference type="GO" id="GO:0030983">
    <property type="term" value="F:mismatched DNA binding"/>
    <property type="evidence" value="ECO:0007669"/>
    <property type="project" value="InterPro"/>
</dbReference>
<dbReference type="GO" id="GO:0006298">
    <property type="term" value="P:mismatch repair"/>
    <property type="evidence" value="ECO:0007669"/>
    <property type="project" value="UniProtKB-UniRule"/>
</dbReference>
<dbReference type="CDD" id="cd03284">
    <property type="entry name" value="ABC_MutS1"/>
    <property type="match status" value="1"/>
</dbReference>
<dbReference type="FunFam" id="1.10.1420.10:FF:000007">
    <property type="entry name" value="DNA mismatch repair protein MutS"/>
    <property type="match status" value="1"/>
</dbReference>
<dbReference type="FunFam" id="3.40.1170.10:FF:000001">
    <property type="entry name" value="DNA mismatch repair protein MutS"/>
    <property type="match status" value="1"/>
</dbReference>
<dbReference type="FunFam" id="3.40.50.300:FF:000896">
    <property type="entry name" value="DNA mismatch repair protein MutS"/>
    <property type="match status" value="1"/>
</dbReference>
<dbReference type="Gene3D" id="1.10.1420.10">
    <property type="match status" value="2"/>
</dbReference>
<dbReference type="Gene3D" id="3.40.1170.10">
    <property type="entry name" value="DNA repair protein MutS, domain I"/>
    <property type="match status" value="1"/>
</dbReference>
<dbReference type="Gene3D" id="3.30.420.110">
    <property type="entry name" value="MutS, connector domain"/>
    <property type="match status" value="1"/>
</dbReference>
<dbReference type="Gene3D" id="3.40.50.300">
    <property type="entry name" value="P-loop containing nucleotide triphosphate hydrolases"/>
    <property type="match status" value="1"/>
</dbReference>
<dbReference type="HAMAP" id="MF_00096">
    <property type="entry name" value="MutS"/>
    <property type="match status" value="1"/>
</dbReference>
<dbReference type="InterPro" id="IPR005748">
    <property type="entry name" value="DNA_mismatch_repair_MutS"/>
</dbReference>
<dbReference type="InterPro" id="IPR007695">
    <property type="entry name" value="DNA_mismatch_repair_MutS-lik_N"/>
</dbReference>
<dbReference type="InterPro" id="IPR017261">
    <property type="entry name" value="DNA_mismatch_repair_MutS/MSH"/>
</dbReference>
<dbReference type="InterPro" id="IPR000432">
    <property type="entry name" value="DNA_mismatch_repair_MutS_C"/>
</dbReference>
<dbReference type="InterPro" id="IPR007861">
    <property type="entry name" value="DNA_mismatch_repair_MutS_clamp"/>
</dbReference>
<dbReference type="InterPro" id="IPR007696">
    <property type="entry name" value="DNA_mismatch_repair_MutS_core"/>
</dbReference>
<dbReference type="InterPro" id="IPR016151">
    <property type="entry name" value="DNA_mismatch_repair_MutS_N"/>
</dbReference>
<dbReference type="InterPro" id="IPR036187">
    <property type="entry name" value="DNA_mismatch_repair_MutS_sf"/>
</dbReference>
<dbReference type="InterPro" id="IPR007860">
    <property type="entry name" value="DNA_mmatch_repair_MutS_con_dom"/>
</dbReference>
<dbReference type="InterPro" id="IPR045076">
    <property type="entry name" value="MutS"/>
</dbReference>
<dbReference type="InterPro" id="IPR036678">
    <property type="entry name" value="MutS_con_dom_sf"/>
</dbReference>
<dbReference type="InterPro" id="IPR027417">
    <property type="entry name" value="P-loop_NTPase"/>
</dbReference>
<dbReference type="NCBIfam" id="TIGR01070">
    <property type="entry name" value="mutS1"/>
    <property type="match status" value="1"/>
</dbReference>
<dbReference type="NCBIfam" id="NF003810">
    <property type="entry name" value="PRK05399.1"/>
    <property type="match status" value="1"/>
</dbReference>
<dbReference type="PANTHER" id="PTHR11361:SF34">
    <property type="entry name" value="DNA MISMATCH REPAIR PROTEIN MSH1, MITOCHONDRIAL"/>
    <property type="match status" value="1"/>
</dbReference>
<dbReference type="PANTHER" id="PTHR11361">
    <property type="entry name" value="DNA MISMATCH REPAIR PROTEIN MUTS FAMILY MEMBER"/>
    <property type="match status" value="1"/>
</dbReference>
<dbReference type="Pfam" id="PF01624">
    <property type="entry name" value="MutS_I"/>
    <property type="match status" value="1"/>
</dbReference>
<dbReference type="Pfam" id="PF05188">
    <property type="entry name" value="MutS_II"/>
    <property type="match status" value="1"/>
</dbReference>
<dbReference type="Pfam" id="PF05192">
    <property type="entry name" value="MutS_III"/>
    <property type="match status" value="1"/>
</dbReference>
<dbReference type="Pfam" id="PF05190">
    <property type="entry name" value="MutS_IV"/>
    <property type="match status" value="1"/>
</dbReference>
<dbReference type="Pfam" id="PF00488">
    <property type="entry name" value="MutS_V"/>
    <property type="match status" value="1"/>
</dbReference>
<dbReference type="PIRSF" id="PIRSF037677">
    <property type="entry name" value="DNA_mis_repair_Msh6"/>
    <property type="match status" value="1"/>
</dbReference>
<dbReference type="SMART" id="SM00534">
    <property type="entry name" value="MUTSac"/>
    <property type="match status" value="1"/>
</dbReference>
<dbReference type="SMART" id="SM00533">
    <property type="entry name" value="MUTSd"/>
    <property type="match status" value="1"/>
</dbReference>
<dbReference type="SUPFAM" id="SSF55271">
    <property type="entry name" value="DNA repair protein MutS, domain I"/>
    <property type="match status" value="1"/>
</dbReference>
<dbReference type="SUPFAM" id="SSF53150">
    <property type="entry name" value="DNA repair protein MutS, domain II"/>
    <property type="match status" value="1"/>
</dbReference>
<dbReference type="SUPFAM" id="SSF48334">
    <property type="entry name" value="DNA repair protein MutS, domain III"/>
    <property type="match status" value="1"/>
</dbReference>
<dbReference type="SUPFAM" id="SSF52540">
    <property type="entry name" value="P-loop containing nucleoside triphosphate hydrolases"/>
    <property type="match status" value="1"/>
</dbReference>
<dbReference type="PROSITE" id="PS00486">
    <property type="entry name" value="DNA_MISMATCH_REPAIR_2"/>
    <property type="match status" value="1"/>
</dbReference>
<gene>
    <name evidence="1" type="primary">mutS</name>
    <name type="ordered locus">USA300HOU_1227</name>
</gene>
<evidence type="ECO:0000255" key="1">
    <source>
        <dbReference type="HAMAP-Rule" id="MF_00096"/>
    </source>
</evidence>
<sequence length="872" mass="99904">MSNVTPMMQQYLKIKSEYQDCLLFFRLGDFYEMFYEDAKEASRVLEITLTKRDAKKENPIPMCGVPYHSADSYIDTLVNNGYKVAICEQMEDPKQTKGMVRREVVRIVTPGTVMEQGGVDDKQNNYILSFVMNQPEIALSYCDVSTGELKVTHFNDEATLLNEITTINPNEVVINDNISDNLKRQINMVTETITVRETLSSEIYSVNQTEHKLMYQATQLLLDYIHHTQKRDLSHIEDVVQYAAIDYMKMDFYAKRNLELTESIRLKSKKGTLLWLMDETKTPMGARRLKQWIDRPLISKEQIEARLDIVDEFSAHFIERDTLRTYLNQVYDIERLVGRVSYGNVNARDLIQLKHSISEIPNIKALLNSMNQNTLVQVNQLEPLDDLLDILEQSLVEEPPISVKDGGLFKVGFNTQLDEYLEASKNGKTWLAELQAKERQRTGIKSLKISFNKVFGYFIEITRANLQNFEPSEFGYMRKQTLSNAERFITDELKEKEDIILGAEDKAIELEYQLFVQLREEVKKYTERLQQQAKIISELDCLQSFAEIAQKYNYTRPSFSENKTLELVESRHPVVERVMDYNDYVPNNCRLDNETFIYLITGPNMSGKSTYMRQVAIISIMAQMGAYVPCKEAVLPIFDQIFTRIGAADDLVSGKSTFMVEMLEAQKALTYATEDSLIIFDEIGRGTSTYDGLALAQAMIEYVAETSHAKTLFSTHYHELTTLDQALPSLKNVHVAANEYKGELIFLHKVKDGAVDDSYGIQVAKLADLPEKVISRAQVILSEFEASAGKKSSISNLKMVENEPEINQENLNLSVEETTDTLSQKDFEQASFDLFENDQESEIELQIKNLNLSNMTPIEALVKLSELQNQLK</sequence>
<reference key="1">
    <citation type="journal article" date="2007" name="BMC Microbiol.">
        <title>Subtle genetic changes enhance virulence of methicillin resistant and sensitive Staphylococcus aureus.</title>
        <authorList>
            <person name="Highlander S.K."/>
            <person name="Hulten K.G."/>
            <person name="Qin X."/>
            <person name="Jiang H."/>
            <person name="Yerrapragada S."/>
            <person name="Mason E.O. Jr."/>
            <person name="Shang Y."/>
            <person name="Williams T.M."/>
            <person name="Fortunov R.M."/>
            <person name="Liu Y."/>
            <person name="Igboeli O."/>
            <person name="Petrosino J."/>
            <person name="Tirumalai M."/>
            <person name="Uzman A."/>
            <person name="Fox G.E."/>
            <person name="Cardenas A.M."/>
            <person name="Muzny D.M."/>
            <person name="Hemphill L."/>
            <person name="Ding Y."/>
            <person name="Dugan S."/>
            <person name="Blyth P.R."/>
            <person name="Buhay C.J."/>
            <person name="Dinh H.H."/>
            <person name="Hawes A.C."/>
            <person name="Holder M."/>
            <person name="Kovar C.L."/>
            <person name="Lee S.L."/>
            <person name="Liu W."/>
            <person name="Nazareth L.V."/>
            <person name="Wang Q."/>
            <person name="Zhou J."/>
            <person name="Kaplan S.L."/>
            <person name="Weinstock G.M."/>
        </authorList>
    </citation>
    <scope>NUCLEOTIDE SEQUENCE [LARGE SCALE GENOMIC DNA]</scope>
    <source>
        <strain>USA300 / TCH1516</strain>
    </source>
</reference>
<feature type="chain" id="PRO_1000075566" description="DNA mismatch repair protein MutS">
    <location>
        <begin position="1"/>
        <end position="872"/>
    </location>
</feature>
<feature type="binding site" evidence="1">
    <location>
        <begin position="602"/>
        <end position="609"/>
    </location>
    <ligand>
        <name>ATP</name>
        <dbReference type="ChEBI" id="CHEBI:30616"/>
    </ligand>
</feature>
<accession>A8Z1W6</accession>
<comment type="function">
    <text evidence="1">This protein is involved in the repair of mismatches in DNA. It is possible that it carries out the mismatch recognition step. This protein has a weak ATPase activity.</text>
</comment>
<comment type="similarity">
    <text evidence="1">Belongs to the DNA mismatch repair MutS family.</text>
</comment>